<evidence type="ECO:0000255" key="1">
    <source>
        <dbReference type="HAMAP-Rule" id="MF_00382"/>
    </source>
</evidence>
<evidence type="ECO:0000305" key="2"/>
<protein>
    <recommendedName>
        <fullName evidence="1">Large ribosomal subunit protein bL20</fullName>
    </recommendedName>
    <alternativeName>
        <fullName evidence="2">50S ribosomal protein L20</fullName>
    </alternativeName>
</protein>
<sequence length="119" mass="13325">MARVKTGPMSRKRHKKILKLARGYRNAHSKLFRTAHQSVMKALSYAYAHRKKKKGDFRKIWITRINAAARMNGISYSVMMNGLKKAGVAVNRKMLADLAVNDLPAFAKLVDVAKAKGNA</sequence>
<gene>
    <name evidence="1" type="primary">rplT</name>
    <name type="ordered locus">Helmi_17310</name>
    <name type="ORF">HM1_1791</name>
</gene>
<name>RL20_HELMI</name>
<organism>
    <name type="scientific">Heliobacterium modesticaldum (strain ATCC 51547 / Ice1)</name>
    <dbReference type="NCBI Taxonomy" id="498761"/>
    <lineage>
        <taxon>Bacteria</taxon>
        <taxon>Bacillati</taxon>
        <taxon>Bacillota</taxon>
        <taxon>Clostridia</taxon>
        <taxon>Eubacteriales</taxon>
        <taxon>Heliobacteriaceae</taxon>
        <taxon>Heliomicrobium</taxon>
    </lineage>
</organism>
<proteinExistence type="inferred from homology"/>
<dbReference type="EMBL" id="CP000930">
    <property type="protein sequence ID" value="ABZ84356.1"/>
    <property type="molecule type" value="Genomic_DNA"/>
</dbReference>
<dbReference type="RefSeq" id="WP_012282860.1">
    <property type="nucleotide sequence ID" value="NC_010337.2"/>
</dbReference>
<dbReference type="SMR" id="B0TEV4"/>
<dbReference type="STRING" id="498761.HM1_1791"/>
<dbReference type="KEGG" id="hmo:HM1_1791"/>
<dbReference type="eggNOG" id="COG0292">
    <property type="taxonomic scope" value="Bacteria"/>
</dbReference>
<dbReference type="HOGENOM" id="CLU_123265_0_1_9"/>
<dbReference type="OrthoDB" id="9808966at2"/>
<dbReference type="Proteomes" id="UP000008550">
    <property type="component" value="Chromosome"/>
</dbReference>
<dbReference type="GO" id="GO:1990904">
    <property type="term" value="C:ribonucleoprotein complex"/>
    <property type="evidence" value="ECO:0007669"/>
    <property type="project" value="UniProtKB-KW"/>
</dbReference>
<dbReference type="GO" id="GO:0005840">
    <property type="term" value="C:ribosome"/>
    <property type="evidence" value="ECO:0007669"/>
    <property type="project" value="UniProtKB-KW"/>
</dbReference>
<dbReference type="GO" id="GO:0019843">
    <property type="term" value="F:rRNA binding"/>
    <property type="evidence" value="ECO:0007669"/>
    <property type="project" value="UniProtKB-UniRule"/>
</dbReference>
<dbReference type="GO" id="GO:0003735">
    <property type="term" value="F:structural constituent of ribosome"/>
    <property type="evidence" value="ECO:0007669"/>
    <property type="project" value="InterPro"/>
</dbReference>
<dbReference type="GO" id="GO:0000027">
    <property type="term" value="P:ribosomal large subunit assembly"/>
    <property type="evidence" value="ECO:0007669"/>
    <property type="project" value="UniProtKB-UniRule"/>
</dbReference>
<dbReference type="GO" id="GO:0006412">
    <property type="term" value="P:translation"/>
    <property type="evidence" value="ECO:0007669"/>
    <property type="project" value="InterPro"/>
</dbReference>
<dbReference type="CDD" id="cd07026">
    <property type="entry name" value="Ribosomal_L20"/>
    <property type="match status" value="1"/>
</dbReference>
<dbReference type="FunFam" id="1.10.1900.20:FF:000001">
    <property type="entry name" value="50S ribosomal protein L20"/>
    <property type="match status" value="1"/>
</dbReference>
<dbReference type="Gene3D" id="6.10.160.10">
    <property type="match status" value="1"/>
</dbReference>
<dbReference type="Gene3D" id="1.10.1900.20">
    <property type="entry name" value="Ribosomal protein L20"/>
    <property type="match status" value="1"/>
</dbReference>
<dbReference type="HAMAP" id="MF_00382">
    <property type="entry name" value="Ribosomal_bL20"/>
    <property type="match status" value="1"/>
</dbReference>
<dbReference type="InterPro" id="IPR005813">
    <property type="entry name" value="Ribosomal_bL20"/>
</dbReference>
<dbReference type="InterPro" id="IPR049946">
    <property type="entry name" value="RIBOSOMAL_L20_CS"/>
</dbReference>
<dbReference type="InterPro" id="IPR035566">
    <property type="entry name" value="Ribosomal_protein_bL20_C"/>
</dbReference>
<dbReference type="NCBIfam" id="TIGR01032">
    <property type="entry name" value="rplT_bact"/>
    <property type="match status" value="1"/>
</dbReference>
<dbReference type="PANTHER" id="PTHR10986">
    <property type="entry name" value="39S RIBOSOMAL PROTEIN L20"/>
    <property type="match status" value="1"/>
</dbReference>
<dbReference type="Pfam" id="PF00453">
    <property type="entry name" value="Ribosomal_L20"/>
    <property type="match status" value="1"/>
</dbReference>
<dbReference type="PRINTS" id="PR00062">
    <property type="entry name" value="RIBOSOMALL20"/>
</dbReference>
<dbReference type="SUPFAM" id="SSF74731">
    <property type="entry name" value="Ribosomal protein L20"/>
    <property type="match status" value="1"/>
</dbReference>
<dbReference type="PROSITE" id="PS00937">
    <property type="entry name" value="RIBOSOMAL_L20"/>
    <property type="match status" value="1"/>
</dbReference>
<keyword id="KW-1185">Reference proteome</keyword>
<keyword id="KW-0687">Ribonucleoprotein</keyword>
<keyword id="KW-0689">Ribosomal protein</keyword>
<keyword id="KW-0694">RNA-binding</keyword>
<keyword id="KW-0699">rRNA-binding</keyword>
<feature type="chain" id="PRO_1000122323" description="Large ribosomal subunit protein bL20">
    <location>
        <begin position="1"/>
        <end position="119"/>
    </location>
</feature>
<reference key="1">
    <citation type="journal article" date="2008" name="J. Bacteriol.">
        <title>The genome of Heliobacterium modesticaldum, a phototrophic representative of the Firmicutes containing the simplest photosynthetic apparatus.</title>
        <authorList>
            <person name="Sattley W.M."/>
            <person name="Madigan M.T."/>
            <person name="Swingley W.D."/>
            <person name="Cheung P.C."/>
            <person name="Clocksin K.M."/>
            <person name="Conrad A.L."/>
            <person name="Dejesa L.C."/>
            <person name="Honchak B.M."/>
            <person name="Jung D.O."/>
            <person name="Karbach L.E."/>
            <person name="Kurdoglu A."/>
            <person name="Lahiri S."/>
            <person name="Mastrian S.D."/>
            <person name="Page L.E."/>
            <person name="Taylor H.L."/>
            <person name="Wang Z.T."/>
            <person name="Raymond J."/>
            <person name="Chen M."/>
            <person name="Blankenship R.E."/>
            <person name="Touchman J.W."/>
        </authorList>
    </citation>
    <scope>NUCLEOTIDE SEQUENCE [LARGE SCALE GENOMIC DNA]</scope>
    <source>
        <strain>ATCC 51547 / Ice1</strain>
    </source>
</reference>
<comment type="function">
    <text evidence="1">Binds directly to 23S ribosomal RNA and is necessary for the in vitro assembly process of the 50S ribosomal subunit. It is not involved in the protein synthesizing functions of that subunit.</text>
</comment>
<comment type="similarity">
    <text evidence="1">Belongs to the bacterial ribosomal protein bL20 family.</text>
</comment>
<accession>B0TEV4</accession>